<dbReference type="EMBL" id="AY262164">
    <property type="protein sequence ID" value="AAP13553.1"/>
    <property type="molecule type" value="mRNA"/>
</dbReference>
<dbReference type="EMBL" id="AC091646">
    <property type="status" value="NOT_ANNOTATED_CDS"/>
    <property type="molecule type" value="Genomic_DNA"/>
</dbReference>
<dbReference type="RefSeq" id="NP_001265444.1">
    <property type="nucleotide sequence ID" value="NM_001278515.1"/>
</dbReference>
<dbReference type="BioMuta" id="HGNC:18406"/>
<dbReference type="AGR" id="HGNC:18406"/>
<dbReference type="GeneCards" id="GTSCR1"/>
<dbReference type="HGNC" id="HGNC:18406">
    <property type="gene designation" value="GTSCR1"/>
</dbReference>
<dbReference type="neXtProt" id="NX_Q86UQ5"/>
<dbReference type="InParanoid" id="Q86UQ5"/>
<dbReference type="PAN-GO" id="Q86UQ5">
    <property type="GO annotations" value="0 GO annotations based on evolutionary models"/>
</dbReference>
<dbReference type="TreeFam" id="TF341508"/>
<dbReference type="PathwayCommons" id="Q86UQ5"/>
<dbReference type="BioGRID-ORCS" id="220158">
    <property type="hits" value="6 hits in 553 CRISPR screens"/>
</dbReference>
<dbReference type="ChiTaRS" id="GTSCR1">
    <property type="organism name" value="human"/>
</dbReference>
<dbReference type="GenomeRNAi" id="220158"/>
<dbReference type="Pharos" id="Q86UQ5">
    <property type="development level" value="Tdark"/>
</dbReference>
<dbReference type="PRO" id="PR:Q86UQ5"/>
<dbReference type="Proteomes" id="UP000005640">
    <property type="component" value="Unplaced"/>
</dbReference>
<dbReference type="RNAct" id="Q86UQ5">
    <property type="molecule type" value="protein"/>
</dbReference>
<dbReference type="GO" id="GO:0016020">
    <property type="term" value="C:membrane"/>
    <property type="evidence" value="ECO:0007669"/>
    <property type="project" value="UniProtKB-SubCell"/>
</dbReference>
<accession>Q86UQ5</accession>
<accession>J3KSW9</accession>
<protein>
    <recommendedName>
        <fullName>Gilles de la Tourette syndrome chromosomal region candidate gene 1 protein</fullName>
    </recommendedName>
</protein>
<proteinExistence type="uncertain"/>
<organism>
    <name type="scientific">Homo sapiens</name>
    <name type="common">Human</name>
    <dbReference type="NCBI Taxonomy" id="9606"/>
    <lineage>
        <taxon>Eukaryota</taxon>
        <taxon>Metazoa</taxon>
        <taxon>Chordata</taxon>
        <taxon>Craniata</taxon>
        <taxon>Vertebrata</taxon>
        <taxon>Euteleostomi</taxon>
        <taxon>Mammalia</taxon>
        <taxon>Eutheria</taxon>
        <taxon>Euarchontoglires</taxon>
        <taxon>Primates</taxon>
        <taxon>Haplorrhini</taxon>
        <taxon>Catarrhini</taxon>
        <taxon>Hominidae</taxon>
        <taxon>Homo</taxon>
    </lineage>
</organism>
<sequence length="136" mass="15623">MQSDIYHPGHSFPSWVLCWVHSCGHEGHLRETAEIRKTHQNGDLQIRGGRGRRESTEIFQVASVTEGEESPPAICMEVFLFLWFIAPIYACVCRIFKIQVRNTVKNSSTASLAPSISTSEERQIRIERHHYHLYGQ</sequence>
<gene>
    <name type="primary">GTSCR1</name>
</gene>
<reference key="1">
    <citation type="journal article" date="2003" name="Proc. Natl. Acad. Sci. U.S.A.">
        <title>Epigenetic abnormalities associated with a chromosome 18(q21-q22) inversion and a Gilles de la Tourette syndrome phenotype.</title>
        <authorList>
            <person name="State M.W."/>
            <person name="Greally J.M."/>
            <person name="Cuker A."/>
            <person name="Bowers P.N."/>
            <person name="Henegariu O."/>
            <person name="Morgan T."/>
            <person name="Gunel M."/>
            <person name="DiLuna M."/>
            <person name="King R.A."/>
            <person name="Nelson C."/>
            <person name="Donovan A."/>
            <person name="Anderson G.M."/>
            <person name="Leckman J.F."/>
            <person name="Hawkins T."/>
            <person name="Pauls D.L."/>
            <person name="Lifton R.P."/>
            <person name="Ward D.C."/>
        </authorList>
    </citation>
    <scope>NUCLEOTIDE SEQUENCE [MRNA]</scope>
</reference>
<reference key="2">
    <citation type="journal article" date="2005" name="Nature">
        <title>DNA sequence and analysis of human chromosome 18.</title>
        <authorList>
            <person name="Nusbaum C."/>
            <person name="Zody M.C."/>
            <person name="Borowsky M.L."/>
            <person name="Kamal M."/>
            <person name="Kodira C.D."/>
            <person name="Taylor T.D."/>
            <person name="Whittaker C.A."/>
            <person name="Chang J.L."/>
            <person name="Cuomo C.A."/>
            <person name="Dewar K."/>
            <person name="FitzGerald M.G."/>
            <person name="Yang X."/>
            <person name="Abouelleil A."/>
            <person name="Allen N.R."/>
            <person name="Anderson S."/>
            <person name="Bloom T."/>
            <person name="Bugalter B."/>
            <person name="Butler J."/>
            <person name="Cook A."/>
            <person name="DeCaprio D."/>
            <person name="Engels R."/>
            <person name="Garber M."/>
            <person name="Gnirke A."/>
            <person name="Hafez N."/>
            <person name="Hall J.L."/>
            <person name="Norman C.H."/>
            <person name="Itoh T."/>
            <person name="Jaffe D.B."/>
            <person name="Kuroki Y."/>
            <person name="Lehoczky J."/>
            <person name="Lui A."/>
            <person name="Macdonald P."/>
            <person name="Mauceli E."/>
            <person name="Mikkelsen T.S."/>
            <person name="Naylor J.W."/>
            <person name="Nicol R."/>
            <person name="Nguyen C."/>
            <person name="Noguchi H."/>
            <person name="O'Leary S.B."/>
            <person name="Piqani B."/>
            <person name="Smith C.L."/>
            <person name="Talamas J.A."/>
            <person name="Topham K."/>
            <person name="Totoki Y."/>
            <person name="Toyoda A."/>
            <person name="Wain H.M."/>
            <person name="Young S.K."/>
            <person name="Zeng Q."/>
            <person name="Zimmer A.R."/>
            <person name="Fujiyama A."/>
            <person name="Hattori M."/>
            <person name="Birren B.W."/>
            <person name="Sakaki Y."/>
            <person name="Lander E.S."/>
        </authorList>
    </citation>
    <scope>NUCLEOTIDE SEQUENCE [LARGE SCALE GENOMIC DNA]</scope>
</reference>
<feature type="chain" id="PRO_0000271344" description="Gilles de la Tourette syndrome chromosomal region candidate gene 1 protein">
    <location>
        <begin position="1"/>
        <end position="136"/>
    </location>
</feature>
<feature type="transmembrane region" description="Helical" evidence="1">
    <location>
        <begin position="73"/>
        <end position="93"/>
    </location>
</feature>
<feature type="sequence conflict" description="In Ref. 1; AAP13553." evidence="2" ref="1">
    <original>WVHSCGHEGHLRETAEI</original>
    <variation>KVTYTILATASQVGSFA</variation>
    <location>
        <begin position="19"/>
        <end position="35"/>
    </location>
</feature>
<evidence type="ECO:0000255" key="1"/>
<evidence type="ECO:0000305" key="2"/>
<name>GTSC1_HUMAN</name>
<comment type="subcellular location">
    <subcellularLocation>
        <location evidence="2">Membrane</location>
        <topology evidence="2">Single-pass membrane protein</topology>
    </subcellularLocation>
</comment>
<comment type="caution">
    <text evidence="2">Could be the product of a pseudogene.</text>
</comment>
<keyword id="KW-0472">Membrane</keyword>
<keyword id="KW-1185">Reference proteome</keyword>
<keyword id="KW-0812">Transmembrane</keyword>
<keyword id="KW-1133">Transmembrane helix</keyword>